<evidence type="ECO:0000255" key="1">
    <source>
        <dbReference type="HAMAP-Rule" id="MF_00175"/>
    </source>
</evidence>
<evidence type="ECO:0000255" key="2">
    <source>
        <dbReference type="PROSITE-ProRule" id="PRU01250"/>
    </source>
</evidence>
<name>CLPX_YERE8</name>
<sequence>MTDKRKDGSGKLLYCSFCGKSQHEVRKLIAGPSVYICDECVDLCNDIIREEIKEVAPHRERSSLPTPHEIRRHLDDYVIGQEPAKKVLAVAVYNHYKRLRNGDTSNGIELGKSNILLIGPTGSGKTLLAETLARFLDVPFTMADATTLTEAGYVGEDVENIIQKLLQKCDYDVQKAQRGIVYIDEIDKISRKSDNPSITRDVSGEGVQQALLKLIEGTIAAVPPQGGRKHPQQEFLQVDTSKILFICGGAFAGLDKVIGQRINTGSGIGFGATVKGKSEKATEGELLRQAEPEDLIKFGLIPEFIGRLPVVATLSELSEDALIQILKEPKNALTKQYQALFNLEGVELEFRDEALTAIAKKAMARKTGARGLRSIVEGALLDTMYDLPSMESVEKVVVDESVIAGQSAPMLIYGQPEAQASGE</sequence>
<feature type="chain" id="PRO_1000024704" description="ATP-dependent Clp protease ATP-binding subunit ClpX">
    <location>
        <begin position="1"/>
        <end position="423"/>
    </location>
</feature>
<feature type="domain" description="ClpX-type ZB" evidence="2">
    <location>
        <begin position="2"/>
        <end position="56"/>
    </location>
</feature>
<feature type="binding site" evidence="2">
    <location>
        <position position="15"/>
    </location>
    <ligand>
        <name>Zn(2+)</name>
        <dbReference type="ChEBI" id="CHEBI:29105"/>
    </ligand>
</feature>
<feature type="binding site" evidence="2">
    <location>
        <position position="18"/>
    </location>
    <ligand>
        <name>Zn(2+)</name>
        <dbReference type="ChEBI" id="CHEBI:29105"/>
    </ligand>
</feature>
<feature type="binding site" evidence="2">
    <location>
        <position position="37"/>
    </location>
    <ligand>
        <name>Zn(2+)</name>
        <dbReference type="ChEBI" id="CHEBI:29105"/>
    </ligand>
</feature>
<feature type="binding site" evidence="2">
    <location>
        <position position="40"/>
    </location>
    <ligand>
        <name>Zn(2+)</name>
        <dbReference type="ChEBI" id="CHEBI:29105"/>
    </ligand>
</feature>
<feature type="binding site" evidence="1">
    <location>
        <begin position="120"/>
        <end position="127"/>
    </location>
    <ligand>
        <name>ATP</name>
        <dbReference type="ChEBI" id="CHEBI:30616"/>
    </ligand>
</feature>
<organism>
    <name type="scientific">Yersinia enterocolitica serotype O:8 / biotype 1B (strain NCTC 13174 / 8081)</name>
    <dbReference type="NCBI Taxonomy" id="393305"/>
    <lineage>
        <taxon>Bacteria</taxon>
        <taxon>Pseudomonadati</taxon>
        <taxon>Pseudomonadota</taxon>
        <taxon>Gammaproteobacteria</taxon>
        <taxon>Enterobacterales</taxon>
        <taxon>Yersiniaceae</taxon>
        <taxon>Yersinia</taxon>
    </lineage>
</organism>
<comment type="function">
    <text evidence="1">ATP-dependent specificity component of the Clp protease. It directs the protease to specific substrates. Can perform chaperone functions in the absence of ClpP.</text>
</comment>
<comment type="subunit">
    <text evidence="1">Component of the ClpX-ClpP complex. Forms a hexameric ring that, in the presence of ATP, binds to fourteen ClpP subunits assembled into a disk-like structure with a central cavity, resembling the structure of eukaryotic proteasomes.</text>
</comment>
<comment type="similarity">
    <text evidence="1">Belongs to the ClpX chaperone family.</text>
</comment>
<gene>
    <name evidence="1" type="primary">clpX</name>
    <name type="ordered locus">YE3133</name>
</gene>
<accession>A1JNN1</accession>
<reference key="1">
    <citation type="journal article" date="2006" name="PLoS Genet.">
        <title>The complete genome sequence and comparative genome analysis of the high pathogenicity Yersinia enterocolitica strain 8081.</title>
        <authorList>
            <person name="Thomson N.R."/>
            <person name="Howard S."/>
            <person name="Wren B.W."/>
            <person name="Holden M.T.G."/>
            <person name="Crossman L."/>
            <person name="Challis G.L."/>
            <person name="Churcher C."/>
            <person name="Mungall K."/>
            <person name="Brooks K."/>
            <person name="Chillingworth T."/>
            <person name="Feltwell T."/>
            <person name="Abdellah Z."/>
            <person name="Hauser H."/>
            <person name="Jagels K."/>
            <person name="Maddison M."/>
            <person name="Moule S."/>
            <person name="Sanders M."/>
            <person name="Whitehead S."/>
            <person name="Quail M.A."/>
            <person name="Dougan G."/>
            <person name="Parkhill J."/>
            <person name="Prentice M.B."/>
        </authorList>
    </citation>
    <scope>NUCLEOTIDE SEQUENCE [LARGE SCALE GENOMIC DNA]</scope>
    <source>
        <strain>NCTC 13174 / 8081</strain>
    </source>
</reference>
<keyword id="KW-0067">ATP-binding</keyword>
<keyword id="KW-0143">Chaperone</keyword>
<keyword id="KW-0479">Metal-binding</keyword>
<keyword id="KW-0547">Nucleotide-binding</keyword>
<keyword id="KW-0862">Zinc</keyword>
<protein>
    <recommendedName>
        <fullName evidence="1">ATP-dependent Clp protease ATP-binding subunit ClpX</fullName>
    </recommendedName>
</protein>
<dbReference type="EMBL" id="AM286415">
    <property type="protein sequence ID" value="CAL13168.1"/>
    <property type="molecule type" value="Genomic_DNA"/>
</dbReference>
<dbReference type="RefSeq" id="WP_005167638.1">
    <property type="nucleotide sequence ID" value="NC_008800.1"/>
</dbReference>
<dbReference type="RefSeq" id="YP_001007315.1">
    <property type="nucleotide sequence ID" value="NC_008800.1"/>
</dbReference>
<dbReference type="BMRB" id="A1JNN1"/>
<dbReference type="SMR" id="A1JNN1"/>
<dbReference type="KEGG" id="yen:YE3133"/>
<dbReference type="PATRIC" id="fig|393305.7.peg.3337"/>
<dbReference type="eggNOG" id="COG1219">
    <property type="taxonomic scope" value="Bacteria"/>
</dbReference>
<dbReference type="HOGENOM" id="CLU_014218_8_2_6"/>
<dbReference type="OrthoDB" id="9804062at2"/>
<dbReference type="Proteomes" id="UP000000642">
    <property type="component" value="Chromosome"/>
</dbReference>
<dbReference type="GO" id="GO:0009376">
    <property type="term" value="C:HslUV protease complex"/>
    <property type="evidence" value="ECO:0007669"/>
    <property type="project" value="TreeGrafter"/>
</dbReference>
<dbReference type="GO" id="GO:0005524">
    <property type="term" value="F:ATP binding"/>
    <property type="evidence" value="ECO:0007669"/>
    <property type="project" value="UniProtKB-UniRule"/>
</dbReference>
<dbReference type="GO" id="GO:0016887">
    <property type="term" value="F:ATP hydrolysis activity"/>
    <property type="evidence" value="ECO:0007669"/>
    <property type="project" value="InterPro"/>
</dbReference>
<dbReference type="GO" id="GO:0140662">
    <property type="term" value="F:ATP-dependent protein folding chaperone"/>
    <property type="evidence" value="ECO:0007669"/>
    <property type="project" value="InterPro"/>
</dbReference>
<dbReference type="GO" id="GO:0046983">
    <property type="term" value="F:protein dimerization activity"/>
    <property type="evidence" value="ECO:0007669"/>
    <property type="project" value="InterPro"/>
</dbReference>
<dbReference type="GO" id="GO:0051082">
    <property type="term" value="F:unfolded protein binding"/>
    <property type="evidence" value="ECO:0007669"/>
    <property type="project" value="UniProtKB-UniRule"/>
</dbReference>
<dbReference type="GO" id="GO:0008270">
    <property type="term" value="F:zinc ion binding"/>
    <property type="evidence" value="ECO:0007669"/>
    <property type="project" value="InterPro"/>
</dbReference>
<dbReference type="GO" id="GO:0051301">
    <property type="term" value="P:cell division"/>
    <property type="evidence" value="ECO:0007669"/>
    <property type="project" value="TreeGrafter"/>
</dbReference>
<dbReference type="GO" id="GO:0051603">
    <property type="term" value="P:proteolysis involved in protein catabolic process"/>
    <property type="evidence" value="ECO:0007669"/>
    <property type="project" value="TreeGrafter"/>
</dbReference>
<dbReference type="CDD" id="cd19497">
    <property type="entry name" value="RecA-like_ClpX"/>
    <property type="match status" value="1"/>
</dbReference>
<dbReference type="FunFam" id="1.10.8.60:FF:000002">
    <property type="entry name" value="ATP-dependent Clp protease ATP-binding subunit ClpX"/>
    <property type="match status" value="1"/>
</dbReference>
<dbReference type="FunFam" id="3.40.50.300:FF:000005">
    <property type="entry name" value="ATP-dependent Clp protease ATP-binding subunit ClpX"/>
    <property type="match status" value="1"/>
</dbReference>
<dbReference type="Gene3D" id="1.10.8.60">
    <property type="match status" value="1"/>
</dbReference>
<dbReference type="Gene3D" id="6.20.220.10">
    <property type="entry name" value="ClpX chaperone, C4-type zinc finger domain"/>
    <property type="match status" value="1"/>
</dbReference>
<dbReference type="Gene3D" id="3.40.50.300">
    <property type="entry name" value="P-loop containing nucleotide triphosphate hydrolases"/>
    <property type="match status" value="1"/>
</dbReference>
<dbReference type="HAMAP" id="MF_00175">
    <property type="entry name" value="ClpX"/>
    <property type="match status" value="1"/>
</dbReference>
<dbReference type="InterPro" id="IPR003593">
    <property type="entry name" value="AAA+_ATPase"/>
</dbReference>
<dbReference type="InterPro" id="IPR050052">
    <property type="entry name" value="ATP-dep_Clp_protease_ClpX"/>
</dbReference>
<dbReference type="InterPro" id="IPR003959">
    <property type="entry name" value="ATPase_AAA_core"/>
</dbReference>
<dbReference type="InterPro" id="IPR019489">
    <property type="entry name" value="Clp_ATPase_C"/>
</dbReference>
<dbReference type="InterPro" id="IPR004487">
    <property type="entry name" value="Clp_protease_ATP-bd_su_ClpX"/>
</dbReference>
<dbReference type="InterPro" id="IPR046425">
    <property type="entry name" value="ClpX_bact"/>
</dbReference>
<dbReference type="InterPro" id="IPR027417">
    <property type="entry name" value="P-loop_NTPase"/>
</dbReference>
<dbReference type="InterPro" id="IPR010603">
    <property type="entry name" value="Znf_CppX_C4"/>
</dbReference>
<dbReference type="InterPro" id="IPR038366">
    <property type="entry name" value="Znf_CppX_C4_sf"/>
</dbReference>
<dbReference type="NCBIfam" id="TIGR00382">
    <property type="entry name" value="clpX"/>
    <property type="match status" value="1"/>
</dbReference>
<dbReference type="NCBIfam" id="NF003745">
    <property type="entry name" value="PRK05342.1"/>
    <property type="match status" value="1"/>
</dbReference>
<dbReference type="PANTHER" id="PTHR48102:SF7">
    <property type="entry name" value="ATP-DEPENDENT CLP PROTEASE ATP-BINDING SUBUNIT CLPX-LIKE, MITOCHONDRIAL"/>
    <property type="match status" value="1"/>
</dbReference>
<dbReference type="PANTHER" id="PTHR48102">
    <property type="entry name" value="ATP-DEPENDENT CLP PROTEASE ATP-BINDING SUBUNIT CLPX-LIKE, MITOCHONDRIAL-RELATED"/>
    <property type="match status" value="1"/>
</dbReference>
<dbReference type="Pfam" id="PF07724">
    <property type="entry name" value="AAA_2"/>
    <property type="match status" value="1"/>
</dbReference>
<dbReference type="Pfam" id="PF10431">
    <property type="entry name" value="ClpB_D2-small"/>
    <property type="match status" value="1"/>
</dbReference>
<dbReference type="Pfam" id="PF06689">
    <property type="entry name" value="zf-C4_ClpX"/>
    <property type="match status" value="1"/>
</dbReference>
<dbReference type="SMART" id="SM00382">
    <property type="entry name" value="AAA"/>
    <property type="match status" value="1"/>
</dbReference>
<dbReference type="SMART" id="SM01086">
    <property type="entry name" value="ClpB_D2-small"/>
    <property type="match status" value="1"/>
</dbReference>
<dbReference type="SMART" id="SM00994">
    <property type="entry name" value="zf-C4_ClpX"/>
    <property type="match status" value="1"/>
</dbReference>
<dbReference type="SUPFAM" id="SSF57716">
    <property type="entry name" value="Glucocorticoid receptor-like (DNA-binding domain)"/>
    <property type="match status" value="1"/>
</dbReference>
<dbReference type="SUPFAM" id="SSF52540">
    <property type="entry name" value="P-loop containing nucleoside triphosphate hydrolases"/>
    <property type="match status" value="1"/>
</dbReference>
<dbReference type="PROSITE" id="PS51902">
    <property type="entry name" value="CLPX_ZB"/>
    <property type="match status" value="1"/>
</dbReference>
<proteinExistence type="inferred from homology"/>